<gene>
    <name evidence="1" type="primary">argS</name>
    <name type="ordered locus">Exig_2860</name>
</gene>
<proteinExistence type="inferred from homology"/>
<protein>
    <recommendedName>
        <fullName evidence="1">Arginine--tRNA ligase</fullName>
        <ecNumber evidence="1">6.1.1.19</ecNumber>
    </recommendedName>
    <alternativeName>
        <fullName evidence="1">Arginyl-tRNA synthetase</fullName>
        <shortName evidence="1">ArgRS</shortName>
    </alternativeName>
</protein>
<name>SYR_EXIS2</name>
<comment type="catalytic activity">
    <reaction evidence="1">
        <text>tRNA(Arg) + L-arginine + ATP = L-arginyl-tRNA(Arg) + AMP + diphosphate</text>
        <dbReference type="Rhea" id="RHEA:20301"/>
        <dbReference type="Rhea" id="RHEA-COMP:9658"/>
        <dbReference type="Rhea" id="RHEA-COMP:9673"/>
        <dbReference type="ChEBI" id="CHEBI:30616"/>
        <dbReference type="ChEBI" id="CHEBI:32682"/>
        <dbReference type="ChEBI" id="CHEBI:33019"/>
        <dbReference type="ChEBI" id="CHEBI:78442"/>
        <dbReference type="ChEBI" id="CHEBI:78513"/>
        <dbReference type="ChEBI" id="CHEBI:456215"/>
        <dbReference type="EC" id="6.1.1.19"/>
    </reaction>
</comment>
<comment type="subunit">
    <text evidence="1">Monomer.</text>
</comment>
<comment type="subcellular location">
    <subcellularLocation>
        <location evidence="1">Cytoplasm</location>
    </subcellularLocation>
</comment>
<comment type="similarity">
    <text evidence="1">Belongs to the class-I aminoacyl-tRNA synthetase family.</text>
</comment>
<dbReference type="EC" id="6.1.1.19" evidence="1"/>
<dbReference type="EMBL" id="CP001022">
    <property type="protein sequence ID" value="ACB62306.1"/>
    <property type="molecule type" value="Genomic_DNA"/>
</dbReference>
<dbReference type="RefSeq" id="WP_012371722.1">
    <property type="nucleotide sequence ID" value="NC_010556.1"/>
</dbReference>
<dbReference type="SMR" id="B1YFI1"/>
<dbReference type="STRING" id="262543.Exig_2860"/>
<dbReference type="KEGG" id="esi:Exig_2860"/>
<dbReference type="eggNOG" id="COG0018">
    <property type="taxonomic scope" value="Bacteria"/>
</dbReference>
<dbReference type="HOGENOM" id="CLU_006406_6_1_9"/>
<dbReference type="OrthoDB" id="9805987at2"/>
<dbReference type="Proteomes" id="UP000001681">
    <property type="component" value="Chromosome"/>
</dbReference>
<dbReference type="GO" id="GO:0005737">
    <property type="term" value="C:cytoplasm"/>
    <property type="evidence" value="ECO:0007669"/>
    <property type="project" value="UniProtKB-SubCell"/>
</dbReference>
<dbReference type="GO" id="GO:0004814">
    <property type="term" value="F:arginine-tRNA ligase activity"/>
    <property type="evidence" value="ECO:0007669"/>
    <property type="project" value="UniProtKB-UniRule"/>
</dbReference>
<dbReference type="GO" id="GO:0005524">
    <property type="term" value="F:ATP binding"/>
    <property type="evidence" value="ECO:0007669"/>
    <property type="project" value="UniProtKB-UniRule"/>
</dbReference>
<dbReference type="GO" id="GO:0006420">
    <property type="term" value="P:arginyl-tRNA aminoacylation"/>
    <property type="evidence" value="ECO:0007669"/>
    <property type="project" value="UniProtKB-UniRule"/>
</dbReference>
<dbReference type="CDD" id="cd07956">
    <property type="entry name" value="Anticodon_Ia_Arg"/>
    <property type="match status" value="1"/>
</dbReference>
<dbReference type="CDD" id="cd00671">
    <property type="entry name" value="ArgRS_core"/>
    <property type="match status" value="1"/>
</dbReference>
<dbReference type="FunFam" id="3.40.50.620:FF:000116">
    <property type="entry name" value="Arginine--tRNA ligase"/>
    <property type="match status" value="1"/>
</dbReference>
<dbReference type="Gene3D" id="3.30.1360.70">
    <property type="entry name" value="Arginyl tRNA synthetase N-terminal domain"/>
    <property type="match status" value="1"/>
</dbReference>
<dbReference type="Gene3D" id="3.40.50.620">
    <property type="entry name" value="HUPs"/>
    <property type="match status" value="1"/>
</dbReference>
<dbReference type="Gene3D" id="1.10.730.10">
    <property type="entry name" value="Isoleucyl-tRNA Synthetase, Domain 1"/>
    <property type="match status" value="1"/>
</dbReference>
<dbReference type="HAMAP" id="MF_00123">
    <property type="entry name" value="Arg_tRNA_synth"/>
    <property type="match status" value="1"/>
</dbReference>
<dbReference type="InterPro" id="IPR001278">
    <property type="entry name" value="Arg-tRNA-ligase"/>
</dbReference>
<dbReference type="InterPro" id="IPR005148">
    <property type="entry name" value="Arg-tRNA-synth_N"/>
</dbReference>
<dbReference type="InterPro" id="IPR036695">
    <property type="entry name" value="Arg-tRNA-synth_N_sf"/>
</dbReference>
<dbReference type="InterPro" id="IPR035684">
    <property type="entry name" value="ArgRS_core"/>
</dbReference>
<dbReference type="InterPro" id="IPR008909">
    <property type="entry name" value="DALR_anticod-bd"/>
</dbReference>
<dbReference type="InterPro" id="IPR014729">
    <property type="entry name" value="Rossmann-like_a/b/a_fold"/>
</dbReference>
<dbReference type="InterPro" id="IPR009080">
    <property type="entry name" value="tRNAsynth_Ia_anticodon-bd"/>
</dbReference>
<dbReference type="NCBIfam" id="TIGR00456">
    <property type="entry name" value="argS"/>
    <property type="match status" value="1"/>
</dbReference>
<dbReference type="PANTHER" id="PTHR11956:SF5">
    <property type="entry name" value="ARGININE--TRNA LIGASE, CYTOPLASMIC"/>
    <property type="match status" value="1"/>
</dbReference>
<dbReference type="PANTHER" id="PTHR11956">
    <property type="entry name" value="ARGINYL-TRNA SYNTHETASE"/>
    <property type="match status" value="1"/>
</dbReference>
<dbReference type="Pfam" id="PF03485">
    <property type="entry name" value="Arg_tRNA_synt_N"/>
    <property type="match status" value="1"/>
</dbReference>
<dbReference type="Pfam" id="PF05746">
    <property type="entry name" value="DALR_1"/>
    <property type="match status" value="1"/>
</dbReference>
<dbReference type="Pfam" id="PF00750">
    <property type="entry name" value="tRNA-synt_1d"/>
    <property type="match status" value="1"/>
</dbReference>
<dbReference type="PRINTS" id="PR01038">
    <property type="entry name" value="TRNASYNTHARG"/>
</dbReference>
<dbReference type="SMART" id="SM01016">
    <property type="entry name" value="Arg_tRNA_synt_N"/>
    <property type="match status" value="1"/>
</dbReference>
<dbReference type="SMART" id="SM00836">
    <property type="entry name" value="DALR_1"/>
    <property type="match status" value="1"/>
</dbReference>
<dbReference type="SUPFAM" id="SSF47323">
    <property type="entry name" value="Anticodon-binding domain of a subclass of class I aminoacyl-tRNA synthetases"/>
    <property type="match status" value="1"/>
</dbReference>
<dbReference type="SUPFAM" id="SSF55190">
    <property type="entry name" value="Arginyl-tRNA synthetase (ArgRS), N-terminal 'additional' domain"/>
    <property type="match status" value="1"/>
</dbReference>
<dbReference type="SUPFAM" id="SSF52374">
    <property type="entry name" value="Nucleotidylyl transferase"/>
    <property type="match status" value="1"/>
</dbReference>
<sequence>MSYKQQYAQVLHDVIGDALSQEEIEQLIEQPKHEDHGDLAFPCFQLAKAFRKAPMMIATELAEKIDNPLFSNVQAAGPYVNVFLNREVVSREIIKRVLEEQQAYGSSELNGKTIVTDFSSPNIAKPFSMGHLRSTVIGNALNQISRKKGYEVVGINHLGDWGTQFGKLMVAYNMWGKEEDVRSEPIKELLKLYVRFHEEAEENPGLEDEGRAWFKKLEQGDEQATALWTWFREVSLVEFSRVYEMLGVSFDSLNGEAFYNDKMQHVIDLLEEKDLLVESEGAMVVDLEAEGMPPALIKKKDGATLYATRDLAAAVYRLETYGFEQAFYVVGGEQALHFKQLFAVLKKLGFENVDGMHHVPFGLIMKDGKKMSTRKGRIVLLEEVLQDAINVAKQNIAEKNPNLANAEQTAREVGVGAVIFHDLKNERMNNIEFDLEQMLKFEGETGPYVQYTNARANSLLRKGAYDGSAFNGSADDYSWGVVSMLNQFSAVIDRAFTRREPSIISRYVLDLAQSFNKYYGQVRVLEDDAEKQSRLALVKSVTIVLTEGLRLLGVGAPEEM</sequence>
<accession>B1YFI1</accession>
<keyword id="KW-0030">Aminoacyl-tRNA synthetase</keyword>
<keyword id="KW-0067">ATP-binding</keyword>
<keyword id="KW-0963">Cytoplasm</keyword>
<keyword id="KW-0436">Ligase</keyword>
<keyword id="KW-0547">Nucleotide-binding</keyword>
<keyword id="KW-0648">Protein biosynthesis</keyword>
<keyword id="KW-1185">Reference proteome</keyword>
<evidence type="ECO:0000255" key="1">
    <source>
        <dbReference type="HAMAP-Rule" id="MF_00123"/>
    </source>
</evidence>
<reference key="1">
    <citation type="submission" date="2008-04" db="EMBL/GenBank/DDBJ databases">
        <title>Complete sequence of chromosome of Exiguobacterium sibiricum 255-15.</title>
        <authorList>
            <consortium name="US DOE Joint Genome Institute"/>
            <person name="Copeland A."/>
            <person name="Lucas S."/>
            <person name="Lapidus A."/>
            <person name="Glavina del Rio T."/>
            <person name="Dalin E."/>
            <person name="Tice H."/>
            <person name="Bruce D."/>
            <person name="Goodwin L."/>
            <person name="Pitluck S."/>
            <person name="Kiss H."/>
            <person name="Chertkov O."/>
            <person name="Monk C."/>
            <person name="Brettin T."/>
            <person name="Detter J.C."/>
            <person name="Han C."/>
            <person name="Kuske C.R."/>
            <person name="Schmutz J."/>
            <person name="Larimer F."/>
            <person name="Land M."/>
            <person name="Hauser L."/>
            <person name="Kyrpides N."/>
            <person name="Mikhailova N."/>
            <person name="Vishnivetskaya T."/>
            <person name="Rodrigues D.F."/>
            <person name="Gilichinsky D."/>
            <person name="Tiedje J."/>
            <person name="Richardson P."/>
        </authorList>
    </citation>
    <scope>NUCLEOTIDE SEQUENCE [LARGE SCALE GENOMIC DNA]</scope>
    <source>
        <strain>DSM 17290 / CCUG 55495 / CIP 109462 / JCM 13490 / 255-15</strain>
    </source>
</reference>
<organism>
    <name type="scientific">Exiguobacterium sibiricum (strain DSM 17290 / CCUG 55495 / CIP 109462 / JCM 13490 / 255-15)</name>
    <dbReference type="NCBI Taxonomy" id="262543"/>
    <lineage>
        <taxon>Bacteria</taxon>
        <taxon>Bacillati</taxon>
        <taxon>Bacillota</taxon>
        <taxon>Bacilli</taxon>
        <taxon>Bacillales</taxon>
        <taxon>Bacillales Family XII. Incertae Sedis</taxon>
        <taxon>Exiguobacterium</taxon>
    </lineage>
</organism>
<feature type="chain" id="PRO_1000095364" description="Arginine--tRNA ligase">
    <location>
        <begin position="1"/>
        <end position="560"/>
    </location>
</feature>
<feature type="short sequence motif" description="'HIGH' region">
    <location>
        <begin position="121"/>
        <end position="131"/>
    </location>
</feature>